<accession>Q8WQZ3</accession>
<name>DEF_MAMBR</name>
<proteinExistence type="evidence at transcript level"/>
<sequence>MLCLADIRIVASCSAAIKSGYGQQPWLAHVAGPYANSLFDDVPADSYHAAVEYLRLIPASCYLLDGYAAGRDDCRAHCIAPRNRRLYCASYQVCVCRY</sequence>
<protein>
    <recommendedName>
        <fullName evidence="4 5">Defensin</fullName>
    </recommendedName>
</protein>
<feature type="signal peptide" evidence="1">
    <location>
        <begin position="1"/>
        <end status="unknown"/>
    </location>
</feature>
<feature type="chain" id="PRO_0000445348" description="Defensin" evidence="1">
    <location>
        <begin status="unknown"/>
        <end position="98"/>
    </location>
</feature>
<feature type="disulfide bond" evidence="2">
    <location>
        <begin position="61"/>
        <end position="88"/>
    </location>
</feature>
<feature type="disulfide bond" evidence="2">
    <location>
        <begin position="74"/>
        <end position="94"/>
    </location>
</feature>
<feature type="disulfide bond" evidence="2">
    <location>
        <begin position="78"/>
        <end position="96"/>
    </location>
</feature>
<comment type="induction">
    <text evidence="3">By bacterial infection.</text>
</comment>
<comment type="similarity">
    <text evidence="2">Belongs to the invertebrate defensin family. Type 1 subfamily.</text>
</comment>
<evidence type="ECO:0000255" key="1"/>
<evidence type="ECO:0000255" key="2">
    <source>
        <dbReference type="PROSITE-ProRule" id="PRU00710"/>
    </source>
</evidence>
<evidence type="ECO:0000269" key="3">
    <source>
    </source>
</evidence>
<evidence type="ECO:0000303" key="4">
    <source>
    </source>
</evidence>
<evidence type="ECO:0000312" key="5">
    <source>
        <dbReference type="EMBL" id="AAL69980.2"/>
    </source>
</evidence>
<keyword id="KW-0044">Antibiotic</keyword>
<keyword id="KW-0929">Antimicrobial</keyword>
<keyword id="KW-0211">Defensin</keyword>
<keyword id="KW-1015">Disulfide bond</keyword>
<keyword id="KW-0391">Immunity</keyword>
<keyword id="KW-0399">Innate immunity</keyword>
<keyword id="KW-0732">Signal</keyword>
<organism evidence="5">
    <name type="scientific">Mamestra brassicae</name>
    <name type="common">Cabbage moth</name>
    <dbReference type="NCBI Taxonomy" id="55057"/>
    <lineage>
        <taxon>Eukaryota</taxon>
        <taxon>Metazoa</taxon>
        <taxon>Ecdysozoa</taxon>
        <taxon>Arthropoda</taxon>
        <taxon>Hexapoda</taxon>
        <taxon>Insecta</taxon>
        <taxon>Pterygota</taxon>
        <taxon>Neoptera</taxon>
        <taxon>Endopterygota</taxon>
        <taxon>Lepidoptera</taxon>
        <taxon>Glossata</taxon>
        <taxon>Ditrysia</taxon>
        <taxon>Noctuoidea</taxon>
        <taxon>Noctuidae</taxon>
        <taxon>Hadeninae</taxon>
        <taxon>Mamestra</taxon>
    </lineage>
</organism>
<dbReference type="EMBL" id="AF465486">
    <property type="protein sequence ID" value="AAL69980.2"/>
    <property type="molecule type" value="Genomic_DNA"/>
</dbReference>
<dbReference type="GO" id="GO:0042742">
    <property type="term" value="P:defense response to bacterium"/>
    <property type="evidence" value="ECO:0007669"/>
    <property type="project" value="UniProtKB-KW"/>
</dbReference>
<dbReference type="GO" id="GO:0045087">
    <property type="term" value="P:innate immune response"/>
    <property type="evidence" value="ECO:0007669"/>
    <property type="project" value="UniProtKB-KW"/>
</dbReference>
<dbReference type="GO" id="GO:0009617">
    <property type="term" value="P:response to bacterium"/>
    <property type="evidence" value="ECO:0000270"/>
    <property type="project" value="UniProtKB"/>
</dbReference>
<dbReference type="Gene3D" id="3.30.30.10">
    <property type="entry name" value="Knottin, scorpion toxin-like"/>
    <property type="match status" value="1"/>
</dbReference>
<dbReference type="InterPro" id="IPR001542">
    <property type="entry name" value="Defensin_invertebrate/fungal"/>
</dbReference>
<dbReference type="InterPro" id="IPR036574">
    <property type="entry name" value="Scorpion_toxin-like_sf"/>
</dbReference>
<dbReference type="Pfam" id="PF01097">
    <property type="entry name" value="Defensin_2"/>
    <property type="match status" value="1"/>
</dbReference>
<reference evidence="5" key="1">
    <citation type="journal article" date="2003" name="Biol. Cell">
        <title>Molecular characterization of a defensin in the IZD-MB-0503 cell line derived from immunocytes of the insect Mamestra brassicae (Lepidoptera).</title>
        <authorList>
            <person name="Mandrioli M."/>
            <person name="Bugli S."/>
            <person name="Saltini S."/>
            <person name="Genedani S."/>
            <person name="Ottaviani E."/>
        </authorList>
    </citation>
    <scope>NUCLEOTIDE SEQUENCE [GENOMIC DNA]</scope>
    <scope>INDUCTION</scope>
</reference>